<name>MURB_DEIRA</name>
<organism>
    <name type="scientific">Deinococcus radiodurans (strain ATCC 13939 / DSM 20539 / JCM 16871 / CCUG 27074 / LMG 4051 / NBRC 15346 / NCIMB 9279 / VKM B-1422 / R1)</name>
    <dbReference type="NCBI Taxonomy" id="243230"/>
    <lineage>
        <taxon>Bacteria</taxon>
        <taxon>Thermotogati</taxon>
        <taxon>Deinococcota</taxon>
        <taxon>Deinococci</taxon>
        <taxon>Deinococcales</taxon>
        <taxon>Deinococcaceae</taxon>
        <taxon>Deinococcus</taxon>
    </lineage>
</organism>
<sequence length="290" mass="30823">MSRSGARVERVPLARYTTLGVGGESEMWFVETHEQLAEAMSAPYRILGGGSNLVVSDSGVPERVLRLSGPLAERDLTPDPELSTPDLIVTGWVGGGVPLPGLIRALQKLGWSGLEGTVGIPGQVGGSVWMNAGTRFGEMFDGLHTIEIVTPDGVRQVTPDDLKWGYRQSGIPRGHVVSRVRLKLRPSTPEAVLAKMEHADQARKGQPKNKTPGCAFKNPGGVSAGKLIDEAGLKGTQVGNARIAPEHGNFIVNLGGATAADVHALLALIRERVGVPLELEYELWPEQLGG</sequence>
<reference key="1">
    <citation type="journal article" date="1999" name="Science">
        <title>Genome sequence of the radioresistant bacterium Deinococcus radiodurans R1.</title>
        <authorList>
            <person name="White O."/>
            <person name="Eisen J.A."/>
            <person name="Heidelberg J.F."/>
            <person name="Hickey E.K."/>
            <person name="Peterson J.D."/>
            <person name="Dodson R.J."/>
            <person name="Haft D.H."/>
            <person name="Gwinn M.L."/>
            <person name="Nelson W.C."/>
            <person name="Richardson D.L."/>
            <person name="Moffat K.S."/>
            <person name="Qin H."/>
            <person name="Jiang L."/>
            <person name="Pamphile W."/>
            <person name="Crosby M."/>
            <person name="Shen M."/>
            <person name="Vamathevan J.J."/>
            <person name="Lam P."/>
            <person name="McDonald L.A."/>
            <person name="Utterback T.R."/>
            <person name="Zalewski C."/>
            <person name="Makarova K.S."/>
            <person name="Aravind L."/>
            <person name="Daly M.J."/>
            <person name="Minton K.W."/>
            <person name="Fleischmann R.D."/>
            <person name="Ketchum K.A."/>
            <person name="Nelson K.E."/>
            <person name="Salzberg S.L."/>
            <person name="Smith H.O."/>
            <person name="Venter J.C."/>
            <person name="Fraser C.M."/>
        </authorList>
    </citation>
    <scope>NUCLEOTIDE SEQUENCE [LARGE SCALE GENOMIC DNA]</scope>
    <source>
        <strain>ATCC 13939 / DSM 20539 / JCM 16871 / CCUG 27074 / LMG 4051 / NBRC 15346 / NCIMB 9279 / VKM B-1422 / R1</strain>
    </source>
</reference>
<gene>
    <name evidence="1" type="primary">murB</name>
    <name type="ordered locus">DR_0628</name>
</gene>
<feature type="chain" id="PRO_0000179206" description="UDP-N-acetylenolpyruvoylglucosamine reductase">
    <location>
        <begin position="1"/>
        <end position="290"/>
    </location>
</feature>
<feature type="domain" description="FAD-binding PCMH-type" evidence="1">
    <location>
        <begin position="20"/>
        <end position="187"/>
    </location>
</feature>
<feature type="active site" evidence="1">
    <location>
        <position position="167"/>
    </location>
</feature>
<evidence type="ECO:0000255" key="1">
    <source>
        <dbReference type="HAMAP-Rule" id="MF_00037"/>
    </source>
</evidence>
<accession>Q9RWN8</accession>
<dbReference type="EC" id="1.3.1.98" evidence="1"/>
<dbReference type="EMBL" id="AE000513">
    <property type="protein sequence ID" value="AAF10206.1"/>
    <property type="molecule type" value="Genomic_DNA"/>
</dbReference>
<dbReference type="PIR" id="A75497">
    <property type="entry name" value="A75497"/>
</dbReference>
<dbReference type="RefSeq" id="NP_294351.1">
    <property type="nucleotide sequence ID" value="NC_001263.1"/>
</dbReference>
<dbReference type="RefSeq" id="WP_010887273.1">
    <property type="nucleotide sequence ID" value="NC_001263.1"/>
</dbReference>
<dbReference type="SMR" id="Q9RWN8"/>
<dbReference type="FunCoup" id="Q9RWN8">
    <property type="interactions" value="303"/>
</dbReference>
<dbReference type="STRING" id="243230.DR_0628"/>
<dbReference type="PaxDb" id="243230-DR_0628"/>
<dbReference type="EnsemblBacteria" id="AAF10206">
    <property type="protein sequence ID" value="AAF10206"/>
    <property type="gene ID" value="DR_0628"/>
</dbReference>
<dbReference type="GeneID" id="69516874"/>
<dbReference type="KEGG" id="dra:DR_0628"/>
<dbReference type="PATRIC" id="fig|243230.17.peg.807"/>
<dbReference type="eggNOG" id="COG0812">
    <property type="taxonomic scope" value="Bacteria"/>
</dbReference>
<dbReference type="HOGENOM" id="CLU_035304_1_1_0"/>
<dbReference type="InParanoid" id="Q9RWN8"/>
<dbReference type="OrthoDB" id="9804753at2"/>
<dbReference type="UniPathway" id="UPA00219"/>
<dbReference type="Proteomes" id="UP000002524">
    <property type="component" value="Chromosome 1"/>
</dbReference>
<dbReference type="GO" id="GO:0005829">
    <property type="term" value="C:cytosol"/>
    <property type="evidence" value="ECO:0000318"/>
    <property type="project" value="GO_Central"/>
</dbReference>
<dbReference type="GO" id="GO:0071949">
    <property type="term" value="F:FAD binding"/>
    <property type="evidence" value="ECO:0007669"/>
    <property type="project" value="InterPro"/>
</dbReference>
<dbReference type="GO" id="GO:0050660">
    <property type="term" value="F:flavin adenine dinucleotide binding"/>
    <property type="evidence" value="ECO:0000318"/>
    <property type="project" value="GO_Central"/>
</dbReference>
<dbReference type="GO" id="GO:0008762">
    <property type="term" value="F:UDP-N-acetylmuramate dehydrogenase activity"/>
    <property type="evidence" value="ECO:0000318"/>
    <property type="project" value="GO_Central"/>
</dbReference>
<dbReference type="GO" id="GO:0051301">
    <property type="term" value="P:cell division"/>
    <property type="evidence" value="ECO:0007669"/>
    <property type="project" value="UniProtKB-KW"/>
</dbReference>
<dbReference type="GO" id="GO:0071555">
    <property type="term" value="P:cell wall organization"/>
    <property type="evidence" value="ECO:0000318"/>
    <property type="project" value="GO_Central"/>
</dbReference>
<dbReference type="GO" id="GO:0009252">
    <property type="term" value="P:peptidoglycan biosynthetic process"/>
    <property type="evidence" value="ECO:0007669"/>
    <property type="project" value="UniProtKB-UniRule"/>
</dbReference>
<dbReference type="GO" id="GO:0008360">
    <property type="term" value="P:regulation of cell shape"/>
    <property type="evidence" value="ECO:0007669"/>
    <property type="project" value="UniProtKB-KW"/>
</dbReference>
<dbReference type="Gene3D" id="3.30.465.10">
    <property type="match status" value="1"/>
</dbReference>
<dbReference type="Gene3D" id="3.90.78.10">
    <property type="entry name" value="UDP-N-acetylenolpyruvoylglucosamine reductase, C-terminal domain"/>
    <property type="match status" value="1"/>
</dbReference>
<dbReference type="Gene3D" id="3.30.43.10">
    <property type="entry name" value="Uridine Diphospho-n-acetylenolpyruvylglucosamine Reductase, domain 2"/>
    <property type="match status" value="1"/>
</dbReference>
<dbReference type="HAMAP" id="MF_00037">
    <property type="entry name" value="MurB"/>
    <property type="match status" value="1"/>
</dbReference>
<dbReference type="InterPro" id="IPR016166">
    <property type="entry name" value="FAD-bd_PCMH"/>
</dbReference>
<dbReference type="InterPro" id="IPR036318">
    <property type="entry name" value="FAD-bd_PCMH-like_sf"/>
</dbReference>
<dbReference type="InterPro" id="IPR016167">
    <property type="entry name" value="FAD-bd_PCMH_sub1"/>
</dbReference>
<dbReference type="InterPro" id="IPR016169">
    <property type="entry name" value="FAD-bd_PCMH_sub2"/>
</dbReference>
<dbReference type="InterPro" id="IPR003170">
    <property type="entry name" value="MurB"/>
</dbReference>
<dbReference type="InterPro" id="IPR011601">
    <property type="entry name" value="MurB_C"/>
</dbReference>
<dbReference type="InterPro" id="IPR036635">
    <property type="entry name" value="MurB_C_sf"/>
</dbReference>
<dbReference type="InterPro" id="IPR006094">
    <property type="entry name" value="Oxid_FAD_bind_N"/>
</dbReference>
<dbReference type="NCBIfam" id="NF011245">
    <property type="entry name" value="PRK14651.1"/>
    <property type="match status" value="1"/>
</dbReference>
<dbReference type="PANTHER" id="PTHR21071">
    <property type="entry name" value="UDP-N-ACETYLENOLPYRUVOYLGLUCOSAMINE REDUCTASE"/>
    <property type="match status" value="1"/>
</dbReference>
<dbReference type="PANTHER" id="PTHR21071:SF4">
    <property type="entry name" value="UDP-N-ACETYLENOLPYRUVOYLGLUCOSAMINE REDUCTASE"/>
    <property type="match status" value="1"/>
</dbReference>
<dbReference type="Pfam" id="PF01565">
    <property type="entry name" value="FAD_binding_4"/>
    <property type="match status" value="1"/>
</dbReference>
<dbReference type="Pfam" id="PF02873">
    <property type="entry name" value="MurB_C"/>
    <property type="match status" value="1"/>
</dbReference>
<dbReference type="SUPFAM" id="SSF56176">
    <property type="entry name" value="FAD-binding/transporter-associated domain-like"/>
    <property type="match status" value="1"/>
</dbReference>
<dbReference type="SUPFAM" id="SSF56194">
    <property type="entry name" value="Uridine diphospho-N-Acetylenolpyruvylglucosamine reductase, MurB, C-terminal domain"/>
    <property type="match status" value="1"/>
</dbReference>
<dbReference type="PROSITE" id="PS51387">
    <property type="entry name" value="FAD_PCMH"/>
    <property type="match status" value="1"/>
</dbReference>
<proteinExistence type="inferred from homology"/>
<keyword id="KW-0131">Cell cycle</keyword>
<keyword id="KW-0132">Cell division</keyword>
<keyword id="KW-0133">Cell shape</keyword>
<keyword id="KW-0961">Cell wall biogenesis/degradation</keyword>
<keyword id="KW-0963">Cytoplasm</keyword>
<keyword id="KW-0274">FAD</keyword>
<keyword id="KW-0285">Flavoprotein</keyword>
<keyword id="KW-0521">NADP</keyword>
<keyword id="KW-0560">Oxidoreductase</keyword>
<keyword id="KW-0573">Peptidoglycan synthesis</keyword>
<keyword id="KW-1185">Reference proteome</keyword>
<protein>
    <recommendedName>
        <fullName evidence="1">UDP-N-acetylenolpyruvoylglucosamine reductase</fullName>
        <ecNumber evidence="1">1.3.1.98</ecNumber>
    </recommendedName>
    <alternativeName>
        <fullName evidence="1">UDP-N-acetylmuramate dehydrogenase</fullName>
    </alternativeName>
</protein>
<comment type="function">
    <text evidence="1">Cell wall formation.</text>
</comment>
<comment type="catalytic activity">
    <reaction evidence="1">
        <text>UDP-N-acetyl-alpha-D-muramate + NADP(+) = UDP-N-acetyl-3-O-(1-carboxyvinyl)-alpha-D-glucosamine + NADPH + H(+)</text>
        <dbReference type="Rhea" id="RHEA:12248"/>
        <dbReference type="ChEBI" id="CHEBI:15378"/>
        <dbReference type="ChEBI" id="CHEBI:57783"/>
        <dbReference type="ChEBI" id="CHEBI:58349"/>
        <dbReference type="ChEBI" id="CHEBI:68483"/>
        <dbReference type="ChEBI" id="CHEBI:70757"/>
        <dbReference type="EC" id="1.3.1.98"/>
    </reaction>
</comment>
<comment type="cofactor">
    <cofactor evidence="1">
        <name>FAD</name>
        <dbReference type="ChEBI" id="CHEBI:57692"/>
    </cofactor>
</comment>
<comment type="pathway">
    <text evidence="1">Cell wall biogenesis; peptidoglycan biosynthesis.</text>
</comment>
<comment type="subcellular location">
    <subcellularLocation>
        <location evidence="1">Cytoplasm</location>
    </subcellularLocation>
</comment>
<comment type="similarity">
    <text evidence="1">Belongs to the MurB family.</text>
</comment>